<protein>
    <recommendedName>
        <fullName>Vasopressin V1b receptor</fullName>
        <shortName>V1bR</shortName>
    </recommendedName>
    <alternativeName>
        <fullName>AVPR V1b</fullName>
    </alternativeName>
    <alternativeName>
        <fullName>AVPR V3</fullName>
    </alternativeName>
    <alternativeName>
        <fullName>Antidiuretic hormone receptor 1b</fullName>
    </alternativeName>
    <alternativeName>
        <fullName>Vasopressin V3 receptor</fullName>
    </alternativeName>
</protein>
<proteinExistence type="inferred from homology"/>
<gene>
    <name type="primary">Avpr1b</name>
    <name type="synonym">V1br</name>
</gene>
<evidence type="ECO:0000255" key="1"/>
<evidence type="ECO:0000255" key="2">
    <source>
        <dbReference type="PROSITE-ProRule" id="PRU00521"/>
    </source>
</evidence>
<evidence type="ECO:0000256" key="3">
    <source>
        <dbReference type="SAM" id="MobiDB-lite"/>
    </source>
</evidence>
<sequence length="421" mass="46539">MDSEPSWTATPSPGGTLFVPNTTTPWLGRDEELAKVEIGILATVLVLATGGNLAVLLILGLQGHKRSRMHLFVLHLALTDLGVALFQVLPQLLWDITYRFQGSDLLCRAVKYLQVLSMFASTYMLLAMTLDRYLAVCHPLRSLQQPSQSTYPLIAAPWLLAAILSLPQVFIFSLREVIQGSGVLDCWADFYFSWGPRAYITWTTMAIFVLPVVVLTACYGLICHEIYKNLKVKTQAGREERRGWPKSSSSAAAAATRGLPSRVSSISTISRAKIRTVKMTFVIVLAYIACWAPFFSVQMWSVWDENAPNEDSTNVAFTISMLLGNLSSCCNPWIYMGFNSHLLPRSLSHRACCRGSKPRVHRQLSNSSLASRRTTLLTHTCGPSTLRLSLNLSLHAKPKPAGSLKDLEQVDGEATMETSIS</sequence>
<dbReference type="EMBL" id="AF098867">
    <property type="protein sequence ID" value="AAD27957.1"/>
    <property type="molecule type" value="Genomic_DNA"/>
</dbReference>
<dbReference type="EMBL" id="AF098866">
    <property type="protein sequence ID" value="AAD27957.1"/>
    <property type="status" value="JOINED"/>
    <property type="molecule type" value="Genomic_DNA"/>
</dbReference>
<dbReference type="EMBL" id="AB030449">
    <property type="protein sequence ID" value="BAA89205.1"/>
    <property type="molecule type" value="Genomic_DNA"/>
</dbReference>
<dbReference type="CCDS" id="CCDS35703.1"/>
<dbReference type="RefSeq" id="NP_036054.1">
    <property type="nucleotide sequence ID" value="NM_011924.3"/>
</dbReference>
<dbReference type="SMR" id="Q9WU02"/>
<dbReference type="BioGRID" id="204921">
    <property type="interactions" value="1"/>
</dbReference>
<dbReference type="CORUM" id="Q9WU02"/>
<dbReference type="FunCoup" id="Q9WU02">
    <property type="interactions" value="1002"/>
</dbReference>
<dbReference type="STRING" id="10090.ENSMUSP00000027690"/>
<dbReference type="GlyCosmos" id="Q9WU02">
    <property type="glycosylation" value="1 site, No reported glycans"/>
</dbReference>
<dbReference type="GlyGen" id="Q9WU02">
    <property type="glycosylation" value="4 sites, 2 N-linked glycans (2 sites)"/>
</dbReference>
<dbReference type="PhosphoSitePlus" id="Q9WU02"/>
<dbReference type="PaxDb" id="10090-ENSMUSP00000027690"/>
<dbReference type="ProteomicsDB" id="300100"/>
<dbReference type="Antibodypedia" id="20687">
    <property type="antibodies" value="379 antibodies from 35 providers"/>
</dbReference>
<dbReference type="DNASU" id="26361"/>
<dbReference type="Ensembl" id="ENSMUST00000027690.7">
    <property type="protein sequence ID" value="ENSMUSP00000027690.7"/>
    <property type="gene ID" value="ENSMUSG00000026432.8"/>
</dbReference>
<dbReference type="GeneID" id="26361"/>
<dbReference type="KEGG" id="mmu:26361"/>
<dbReference type="UCSC" id="uc007cnl.1">
    <property type="organism name" value="mouse"/>
</dbReference>
<dbReference type="AGR" id="MGI:1347010"/>
<dbReference type="CTD" id="553"/>
<dbReference type="MGI" id="MGI:1347010">
    <property type="gene designation" value="Avpr1b"/>
</dbReference>
<dbReference type="VEuPathDB" id="HostDB:ENSMUSG00000026432"/>
<dbReference type="eggNOG" id="KOG3656">
    <property type="taxonomic scope" value="Eukaryota"/>
</dbReference>
<dbReference type="GeneTree" id="ENSGT01050000244882"/>
<dbReference type="HOGENOM" id="CLU_009579_15_3_1"/>
<dbReference type="InParanoid" id="Q9WU02"/>
<dbReference type="OMA" id="FNSHLWP"/>
<dbReference type="OrthoDB" id="6435638at2759"/>
<dbReference type="PhylomeDB" id="Q9WU02"/>
<dbReference type="TreeFam" id="TF106499"/>
<dbReference type="Reactome" id="R-MMU-388479">
    <property type="pathway name" value="Vasopressin-like receptors"/>
</dbReference>
<dbReference type="Reactome" id="R-MMU-416476">
    <property type="pathway name" value="G alpha (q) signalling events"/>
</dbReference>
<dbReference type="BioGRID-ORCS" id="26361">
    <property type="hits" value="4 hits in 81 CRISPR screens"/>
</dbReference>
<dbReference type="PRO" id="PR:Q9WU02"/>
<dbReference type="Proteomes" id="UP000000589">
    <property type="component" value="Chromosome 1"/>
</dbReference>
<dbReference type="RNAct" id="Q9WU02">
    <property type="molecule type" value="protein"/>
</dbReference>
<dbReference type="Bgee" id="ENSMUSG00000026432">
    <property type="expression patterns" value="Expressed in embryonic post-anal tail and 24 other cell types or tissues"/>
</dbReference>
<dbReference type="ExpressionAtlas" id="Q9WU02">
    <property type="expression patterns" value="baseline and differential"/>
</dbReference>
<dbReference type="GO" id="GO:0005794">
    <property type="term" value="C:Golgi apparatus"/>
    <property type="evidence" value="ECO:0007669"/>
    <property type="project" value="Ensembl"/>
</dbReference>
<dbReference type="GO" id="GO:0005886">
    <property type="term" value="C:plasma membrane"/>
    <property type="evidence" value="ECO:0007669"/>
    <property type="project" value="UniProtKB-SubCell"/>
</dbReference>
<dbReference type="GO" id="GO:0005000">
    <property type="term" value="F:vasopressin receptor activity"/>
    <property type="evidence" value="ECO:0007669"/>
    <property type="project" value="Ensembl"/>
</dbReference>
<dbReference type="GO" id="GO:0007200">
    <property type="term" value="P:phospholipase C-activating G protein-coupled receptor signaling pathway"/>
    <property type="evidence" value="ECO:0007669"/>
    <property type="project" value="Ensembl"/>
</dbReference>
<dbReference type="GO" id="GO:0090238">
    <property type="term" value="P:positive regulation of arachidonate secretion"/>
    <property type="evidence" value="ECO:0007669"/>
    <property type="project" value="Ensembl"/>
</dbReference>
<dbReference type="GO" id="GO:0060732">
    <property type="term" value="P:positive regulation of inositol phosphate biosynthetic process"/>
    <property type="evidence" value="ECO:0007669"/>
    <property type="project" value="Ensembl"/>
</dbReference>
<dbReference type="GO" id="GO:0043410">
    <property type="term" value="P:positive regulation of MAPK cascade"/>
    <property type="evidence" value="ECO:0007669"/>
    <property type="project" value="Ensembl"/>
</dbReference>
<dbReference type="GO" id="GO:0008217">
    <property type="term" value="P:regulation of blood pressure"/>
    <property type="evidence" value="ECO:0000315"/>
    <property type="project" value="MGI"/>
</dbReference>
<dbReference type="GO" id="GO:0042127">
    <property type="term" value="P:regulation of cell population proliferation"/>
    <property type="evidence" value="ECO:0007669"/>
    <property type="project" value="Ensembl"/>
</dbReference>
<dbReference type="GO" id="GO:0001992">
    <property type="term" value="P:regulation of systemic arterial blood pressure by vasopressin"/>
    <property type="evidence" value="ECO:0000316"/>
    <property type="project" value="MGI"/>
</dbReference>
<dbReference type="GO" id="GO:0046718">
    <property type="term" value="P:symbiont entry into host cell"/>
    <property type="evidence" value="ECO:0007669"/>
    <property type="project" value="Ensembl"/>
</dbReference>
<dbReference type="CDD" id="cd15386">
    <property type="entry name" value="7tmA_V1bR"/>
    <property type="match status" value="1"/>
</dbReference>
<dbReference type="FunFam" id="1.20.1070.10:FF:000094">
    <property type="entry name" value="Vasopressin V1a receptor"/>
    <property type="match status" value="1"/>
</dbReference>
<dbReference type="Gene3D" id="1.20.1070.10">
    <property type="entry name" value="Rhodopsin 7-helix transmembrane proteins"/>
    <property type="match status" value="1"/>
</dbReference>
<dbReference type="InterPro" id="IPR000276">
    <property type="entry name" value="GPCR_Rhodpsn"/>
</dbReference>
<dbReference type="InterPro" id="IPR017452">
    <property type="entry name" value="GPCR_Rhodpsn_7TM"/>
</dbReference>
<dbReference type="InterPro" id="IPR015076">
    <property type="entry name" value="V1R_C"/>
</dbReference>
<dbReference type="InterPro" id="IPR001817">
    <property type="entry name" value="Vasoprsn_rcpt"/>
</dbReference>
<dbReference type="InterPro" id="IPR000628">
    <property type="entry name" value="Vprs_rcpt_V1B"/>
</dbReference>
<dbReference type="PANTHER" id="PTHR24241">
    <property type="entry name" value="NEUROPEPTIDE RECEPTOR-RELATED G-PROTEIN COUPLED RECEPTOR"/>
    <property type="match status" value="1"/>
</dbReference>
<dbReference type="PANTHER" id="PTHR24241:SF18">
    <property type="entry name" value="VASOPRESSIN V1B RECEPTOR"/>
    <property type="match status" value="1"/>
</dbReference>
<dbReference type="Pfam" id="PF00001">
    <property type="entry name" value="7tm_1"/>
    <property type="match status" value="1"/>
</dbReference>
<dbReference type="Pfam" id="PF08983">
    <property type="entry name" value="V1R_C"/>
    <property type="match status" value="1"/>
</dbReference>
<dbReference type="PRINTS" id="PR00237">
    <property type="entry name" value="GPCRRHODOPSN"/>
</dbReference>
<dbReference type="PRINTS" id="PR00896">
    <property type="entry name" value="VASOPRESSINR"/>
</dbReference>
<dbReference type="PRINTS" id="PR00897">
    <property type="entry name" value="VASOPRSNV1BR"/>
</dbReference>
<dbReference type="SMART" id="SM01164">
    <property type="entry name" value="DUF1856"/>
    <property type="match status" value="1"/>
</dbReference>
<dbReference type="SUPFAM" id="SSF81321">
    <property type="entry name" value="Family A G protein-coupled receptor-like"/>
    <property type="match status" value="1"/>
</dbReference>
<dbReference type="PROSITE" id="PS00237">
    <property type="entry name" value="G_PROTEIN_RECEP_F1_1"/>
    <property type="match status" value="1"/>
</dbReference>
<dbReference type="PROSITE" id="PS50262">
    <property type="entry name" value="G_PROTEIN_RECEP_F1_2"/>
    <property type="match status" value="1"/>
</dbReference>
<accession>Q9WU02</accession>
<organism>
    <name type="scientific">Mus musculus</name>
    <name type="common">Mouse</name>
    <dbReference type="NCBI Taxonomy" id="10090"/>
    <lineage>
        <taxon>Eukaryota</taxon>
        <taxon>Metazoa</taxon>
        <taxon>Chordata</taxon>
        <taxon>Craniata</taxon>
        <taxon>Vertebrata</taxon>
        <taxon>Euteleostomi</taxon>
        <taxon>Mammalia</taxon>
        <taxon>Eutheria</taxon>
        <taxon>Euarchontoglires</taxon>
        <taxon>Glires</taxon>
        <taxon>Rodentia</taxon>
        <taxon>Myomorpha</taxon>
        <taxon>Muroidea</taxon>
        <taxon>Muridae</taxon>
        <taxon>Murinae</taxon>
        <taxon>Mus</taxon>
        <taxon>Mus</taxon>
    </lineage>
</organism>
<comment type="function">
    <text>Receptor for arginine vasopressin. The activity of this receptor is mediated by G proteins which activate a phosphatidyl-inositol-calcium second messenger system.</text>
</comment>
<comment type="subcellular location">
    <subcellularLocation>
        <location>Cell membrane</location>
        <topology>Multi-pass membrane protein</topology>
    </subcellularLocation>
</comment>
<comment type="similarity">
    <text evidence="2">Belongs to the G-protein coupled receptor 1 family. Vasopressin/oxytocin receptor subfamily.</text>
</comment>
<reference key="1">
    <citation type="journal article" date="1999" name="J. Mol. Endocrinol.">
        <title>Gene and cDNA cloning and characterization of the mouse V3/V1b pituitary vasopressin receptor.</title>
        <authorList>
            <person name="Ventura M.A."/>
            <person name="Rene P."/>
            <person name="de Keyzer Y."/>
            <person name="Bertagna X."/>
            <person name="Clauser E."/>
        </authorList>
    </citation>
    <scope>NUCLEOTIDE SEQUENCE [GENOMIC DNA]</scope>
    <source>
        <strain>129/Sv</strain>
    </source>
</reference>
<reference key="2">
    <citation type="journal article" date="1999" name="Jpn. J. Pharmacol.">
        <title>Structure and sequence of the mouse V1a and V1b vasopressin receptor genes.</title>
        <authorList>
            <person name="Kikuchi S."/>
            <person name="Tanoue A."/>
            <person name="Goda N."/>
            <person name="Matsuo N."/>
            <person name="Tsujimoto G."/>
        </authorList>
    </citation>
    <scope>NUCLEOTIDE SEQUENCE [GENOMIC DNA]</scope>
    <source>
        <strain>129/SvJ</strain>
    </source>
</reference>
<keyword id="KW-1003">Cell membrane</keyword>
<keyword id="KW-1015">Disulfide bond</keyword>
<keyword id="KW-0297">G-protein coupled receptor</keyword>
<keyword id="KW-0325">Glycoprotein</keyword>
<keyword id="KW-0472">Membrane</keyword>
<keyword id="KW-0675">Receptor</keyword>
<keyword id="KW-1185">Reference proteome</keyword>
<keyword id="KW-0807">Transducer</keyword>
<keyword id="KW-0812">Transmembrane</keyword>
<keyword id="KW-1133">Transmembrane helix</keyword>
<name>V1BR_MOUSE</name>
<feature type="chain" id="PRO_0000070204" description="Vasopressin V1b receptor">
    <location>
        <begin position="1"/>
        <end position="421"/>
    </location>
</feature>
<feature type="topological domain" description="Extracellular" evidence="1">
    <location>
        <begin position="1"/>
        <end position="35"/>
    </location>
</feature>
<feature type="transmembrane region" description="Helical; Name=1" evidence="1">
    <location>
        <begin position="36"/>
        <end position="59"/>
    </location>
</feature>
<feature type="topological domain" description="Cytoplasmic" evidence="1">
    <location>
        <begin position="60"/>
        <end position="71"/>
    </location>
</feature>
<feature type="transmembrane region" description="Helical; Name=2" evidence="1">
    <location>
        <begin position="72"/>
        <end position="93"/>
    </location>
</feature>
<feature type="topological domain" description="Extracellular" evidence="1">
    <location>
        <begin position="94"/>
        <end position="108"/>
    </location>
</feature>
<feature type="transmembrane region" description="Helical; Name=3" evidence="1">
    <location>
        <begin position="109"/>
        <end position="130"/>
    </location>
</feature>
<feature type="topological domain" description="Cytoplasmic" evidence="1">
    <location>
        <begin position="131"/>
        <end position="151"/>
    </location>
</feature>
<feature type="transmembrane region" description="Helical; Name=4" evidence="1">
    <location>
        <begin position="152"/>
        <end position="173"/>
    </location>
</feature>
<feature type="topological domain" description="Extracellular" evidence="1">
    <location>
        <begin position="174"/>
        <end position="202"/>
    </location>
</feature>
<feature type="transmembrane region" description="Helical; Name=5" evidence="1">
    <location>
        <begin position="203"/>
        <end position="223"/>
    </location>
</feature>
<feature type="topological domain" description="Cytoplasmic" evidence="1">
    <location>
        <begin position="224"/>
        <end position="280"/>
    </location>
</feature>
<feature type="transmembrane region" description="Helical; Name=6" evidence="1">
    <location>
        <begin position="281"/>
        <end position="300"/>
    </location>
</feature>
<feature type="topological domain" description="Extracellular" evidence="1">
    <location>
        <begin position="301"/>
        <end position="318"/>
    </location>
</feature>
<feature type="transmembrane region" description="Helical; Name=7" evidence="1">
    <location>
        <begin position="319"/>
        <end position="338"/>
    </location>
</feature>
<feature type="topological domain" description="Cytoplasmic" evidence="1">
    <location>
        <begin position="339"/>
        <end position="421"/>
    </location>
</feature>
<feature type="region of interest" description="Disordered" evidence="3">
    <location>
        <begin position="399"/>
        <end position="421"/>
    </location>
</feature>
<feature type="glycosylation site" description="N-linked (GlcNAc...) asparagine" evidence="1">
    <location>
        <position position="21"/>
    </location>
</feature>
<feature type="disulfide bond" evidence="2">
    <location>
        <begin position="107"/>
        <end position="186"/>
    </location>
</feature>